<sequence>MTIIVQLLVFILVIFSTLLVVGIPVTFASPGQWEKSKNLIYTGAGIWTGLVLITGLVNSFIN</sequence>
<proteinExistence type="inferred from homology"/>
<reference key="1">
    <citation type="journal article" date="2004" name="J. Mol. Evol.">
        <title>Comparative analysis of the complete plastid genome sequence of the red alga Gracilaria tenuistipitata var. liui provides insights into the evolution of rhodoplasts and their relationship to other plastids.</title>
        <authorList>
            <person name="Hagopian J.C."/>
            <person name="Reis M."/>
            <person name="Kitajima J.P."/>
            <person name="Bhattacharya D."/>
            <person name="de Oliveira M.C."/>
        </authorList>
    </citation>
    <scope>NUCLEOTIDE SEQUENCE [LARGE SCALE GENOMIC DNA]</scope>
</reference>
<name>PSBZ_GRATL</name>
<organism>
    <name type="scientific">Gracilaria tenuistipitata var. liui</name>
    <name type="common">Red alga</name>
    <dbReference type="NCBI Taxonomy" id="285951"/>
    <lineage>
        <taxon>Eukaryota</taxon>
        <taxon>Rhodophyta</taxon>
        <taxon>Florideophyceae</taxon>
        <taxon>Rhodymeniophycidae</taxon>
        <taxon>Gracilariales</taxon>
        <taxon>Gracilariaceae</taxon>
        <taxon>Gracilaria</taxon>
        <taxon>Gracilaria tenuistipitata</taxon>
    </lineage>
</organism>
<comment type="function">
    <text evidence="1">May control the interaction of photosystem II (PSII) cores with the light-harvesting antenna, regulates electron flow through the 2 photosystem reaction centers. PSII is a light-driven water plastoquinone oxidoreductase, using light energy to abstract electrons from H(2)O, generating a proton gradient subsequently used for ATP formation.</text>
</comment>
<comment type="subunit">
    <text evidence="1">PSII is composed of 1 copy each of membrane proteins PsbA, PsbB, PsbC, PsbD, PsbE, PsbF, PsbH, PsbI, PsbJ, PsbK, PsbL, PsbM, PsbT, sbX, PsbY, PsbZ, Psb30/Ycf12, at least 3 peripheral proteins of the oxygen-evolving complex and a large number of cofactors. It forms dimeric complexes.</text>
</comment>
<comment type="subcellular location">
    <subcellularLocation>
        <location evidence="1">Plastid</location>
        <location evidence="1">Chloroplast thylakoid membrane</location>
        <topology evidence="1">Multi-pass membrane protein</topology>
    </subcellularLocation>
</comment>
<comment type="similarity">
    <text evidence="1">Belongs to the PsbZ family.</text>
</comment>
<comment type="sequence caution" evidence="2">
    <conflict type="erroneous initiation">
        <sequence resource="EMBL-CDS" id="AAT79684"/>
    </conflict>
    <text>Extended N-terminus.</text>
</comment>
<gene>
    <name evidence="1" type="primary">psbZ</name>
    <name type="ordered locus">Grc000103</name>
</gene>
<dbReference type="EMBL" id="AY673996">
    <property type="protein sequence ID" value="AAT79684.1"/>
    <property type="status" value="ALT_INIT"/>
    <property type="molecule type" value="Genomic_DNA"/>
</dbReference>
<dbReference type="SMR" id="Q6B8V1"/>
<dbReference type="GO" id="GO:0009535">
    <property type="term" value="C:chloroplast thylakoid membrane"/>
    <property type="evidence" value="ECO:0007669"/>
    <property type="project" value="UniProtKB-SubCell"/>
</dbReference>
<dbReference type="GO" id="GO:0009539">
    <property type="term" value="C:photosystem II reaction center"/>
    <property type="evidence" value="ECO:0007669"/>
    <property type="project" value="InterPro"/>
</dbReference>
<dbReference type="GO" id="GO:0015979">
    <property type="term" value="P:photosynthesis"/>
    <property type="evidence" value="ECO:0007669"/>
    <property type="project" value="UniProtKB-UniRule"/>
</dbReference>
<dbReference type="GO" id="GO:0042549">
    <property type="term" value="P:photosystem II stabilization"/>
    <property type="evidence" value="ECO:0007669"/>
    <property type="project" value="InterPro"/>
</dbReference>
<dbReference type="Gene3D" id="1.10.287.740">
    <property type="entry name" value="Photosystem II PsbZ, reaction centre"/>
    <property type="match status" value="1"/>
</dbReference>
<dbReference type="HAMAP" id="MF_00644">
    <property type="entry name" value="PSII_PsbZ"/>
    <property type="match status" value="1"/>
</dbReference>
<dbReference type="InterPro" id="IPR002644">
    <property type="entry name" value="PSII_PsbZ"/>
</dbReference>
<dbReference type="InterPro" id="IPR036512">
    <property type="entry name" value="PSII_PsbZ_sf"/>
</dbReference>
<dbReference type="NCBIfam" id="TIGR03043">
    <property type="entry name" value="PS_II_psbZ"/>
    <property type="match status" value="1"/>
</dbReference>
<dbReference type="PANTHER" id="PTHR34971">
    <property type="entry name" value="PHOTOSYSTEM II REACTION CENTER PROTEIN Z"/>
    <property type="match status" value="1"/>
</dbReference>
<dbReference type="PANTHER" id="PTHR34971:SF2">
    <property type="entry name" value="PHOTOSYSTEM II REACTION CENTER PROTEIN Z"/>
    <property type="match status" value="1"/>
</dbReference>
<dbReference type="Pfam" id="PF01737">
    <property type="entry name" value="Ycf9"/>
    <property type="match status" value="1"/>
</dbReference>
<dbReference type="SUPFAM" id="SSF161055">
    <property type="entry name" value="PsbZ-like"/>
    <property type="match status" value="1"/>
</dbReference>
<feature type="chain" id="PRO_0000217704" description="Photosystem II reaction center protein Z">
    <location>
        <begin position="1"/>
        <end position="62"/>
    </location>
</feature>
<feature type="transmembrane region" description="Helical" evidence="1">
    <location>
        <begin position="8"/>
        <end position="28"/>
    </location>
</feature>
<feature type="transmembrane region" description="Helical" evidence="1">
    <location>
        <begin position="41"/>
        <end position="61"/>
    </location>
</feature>
<protein>
    <recommendedName>
        <fullName evidence="1">Photosystem II reaction center protein Z</fullName>
        <shortName evidence="1">PSII-Z</shortName>
    </recommendedName>
</protein>
<accession>Q6B8V1</accession>
<evidence type="ECO:0000255" key="1">
    <source>
        <dbReference type="HAMAP-Rule" id="MF_00644"/>
    </source>
</evidence>
<evidence type="ECO:0000305" key="2"/>
<keyword id="KW-0150">Chloroplast</keyword>
<keyword id="KW-0472">Membrane</keyword>
<keyword id="KW-0602">Photosynthesis</keyword>
<keyword id="KW-0604">Photosystem II</keyword>
<keyword id="KW-0934">Plastid</keyword>
<keyword id="KW-0674">Reaction center</keyword>
<keyword id="KW-0793">Thylakoid</keyword>
<keyword id="KW-0812">Transmembrane</keyword>
<keyword id="KW-1133">Transmembrane helix</keyword>
<geneLocation type="chloroplast"/>